<gene>
    <name evidence="1" type="primary">lgt</name>
    <name type="ordered locus">RB8861</name>
</gene>
<dbReference type="EC" id="2.5.1.145" evidence="1"/>
<dbReference type="EMBL" id="BX294148">
    <property type="protein sequence ID" value="CAD75960.1"/>
    <property type="molecule type" value="Genomic_DNA"/>
</dbReference>
<dbReference type="RefSeq" id="NP_868583.1">
    <property type="nucleotide sequence ID" value="NC_005027.1"/>
</dbReference>
<dbReference type="STRING" id="243090.RB8861"/>
<dbReference type="EnsemblBacteria" id="CAD75960">
    <property type="protein sequence ID" value="CAD75960"/>
    <property type="gene ID" value="RB8861"/>
</dbReference>
<dbReference type="KEGG" id="rba:RB8861"/>
<dbReference type="PATRIC" id="fig|243090.15.peg.4253"/>
<dbReference type="eggNOG" id="COG0682">
    <property type="taxonomic scope" value="Bacteria"/>
</dbReference>
<dbReference type="HOGENOM" id="CLU_013386_1_2_0"/>
<dbReference type="InParanoid" id="Q7UMF7"/>
<dbReference type="OrthoDB" id="871140at2"/>
<dbReference type="UniPathway" id="UPA00664"/>
<dbReference type="Proteomes" id="UP000001025">
    <property type="component" value="Chromosome"/>
</dbReference>
<dbReference type="GO" id="GO:0005886">
    <property type="term" value="C:plasma membrane"/>
    <property type="evidence" value="ECO:0000318"/>
    <property type="project" value="GO_Central"/>
</dbReference>
<dbReference type="GO" id="GO:0008961">
    <property type="term" value="F:phosphatidylglycerol-prolipoprotein diacylglyceryl transferase activity"/>
    <property type="evidence" value="ECO:0000318"/>
    <property type="project" value="GO_Central"/>
</dbReference>
<dbReference type="GO" id="GO:0042158">
    <property type="term" value="P:lipoprotein biosynthetic process"/>
    <property type="evidence" value="ECO:0000318"/>
    <property type="project" value="GO_Central"/>
</dbReference>
<dbReference type="HAMAP" id="MF_01147">
    <property type="entry name" value="Lgt"/>
    <property type="match status" value="1"/>
</dbReference>
<dbReference type="InterPro" id="IPR001640">
    <property type="entry name" value="Lgt"/>
</dbReference>
<dbReference type="PANTHER" id="PTHR30589:SF0">
    <property type="entry name" value="PHOSPHATIDYLGLYCEROL--PROLIPOPROTEIN DIACYLGLYCERYL TRANSFERASE"/>
    <property type="match status" value="1"/>
</dbReference>
<dbReference type="PANTHER" id="PTHR30589">
    <property type="entry name" value="PROLIPOPROTEIN DIACYLGLYCERYL TRANSFERASE"/>
    <property type="match status" value="1"/>
</dbReference>
<dbReference type="Pfam" id="PF01790">
    <property type="entry name" value="LGT"/>
    <property type="match status" value="1"/>
</dbReference>
<feature type="chain" id="PRO_0000172660" description="Phosphatidylglycerol--prolipoprotein diacylglyceryl transferase">
    <location>
        <begin position="1"/>
        <end position="492"/>
    </location>
</feature>
<feature type="transmembrane region" description="Helical" evidence="1">
    <location>
        <begin position="40"/>
        <end position="60"/>
    </location>
</feature>
<feature type="transmembrane region" description="Helical" evidence="1">
    <location>
        <begin position="72"/>
        <end position="92"/>
    </location>
</feature>
<feature type="transmembrane region" description="Helical" evidence="1">
    <location>
        <begin position="106"/>
        <end position="126"/>
    </location>
</feature>
<feature type="transmembrane region" description="Helical" evidence="1">
    <location>
        <begin position="133"/>
        <end position="153"/>
    </location>
</feature>
<feature type="transmembrane region" description="Helical" evidence="1">
    <location>
        <begin position="184"/>
        <end position="204"/>
    </location>
</feature>
<feature type="transmembrane region" description="Helical" evidence="1">
    <location>
        <begin position="214"/>
        <end position="234"/>
    </location>
</feature>
<feature type="transmembrane region" description="Helical" evidence="1">
    <location>
        <begin position="361"/>
        <end position="381"/>
    </location>
</feature>
<feature type="transmembrane region" description="Helical" evidence="1">
    <location>
        <begin position="409"/>
        <end position="429"/>
    </location>
</feature>
<feature type="transmembrane region" description="Helical" evidence="1">
    <location>
        <begin position="441"/>
        <end position="461"/>
    </location>
</feature>
<feature type="binding site" evidence="1">
    <location>
        <position position="230"/>
    </location>
    <ligand>
        <name>a 1,2-diacyl-sn-glycero-3-phospho-(1'-sn-glycerol)</name>
        <dbReference type="ChEBI" id="CHEBI:64716"/>
    </ligand>
</feature>
<protein>
    <recommendedName>
        <fullName evidence="1">Phosphatidylglycerol--prolipoprotein diacylglyceryl transferase</fullName>
        <ecNumber evidence="1">2.5.1.145</ecNumber>
    </recommendedName>
</protein>
<accession>Q7UMF7</accession>
<evidence type="ECO:0000255" key="1">
    <source>
        <dbReference type="HAMAP-Rule" id="MF_01147"/>
    </source>
</evidence>
<evidence type="ECO:0000305" key="2"/>
<reference key="1">
    <citation type="journal article" date="2003" name="Proc. Natl. Acad. Sci. U.S.A.">
        <title>Complete genome sequence of the marine planctomycete Pirellula sp. strain 1.</title>
        <authorList>
            <person name="Gloeckner F.O."/>
            <person name="Kube M."/>
            <person name="Bauer M."/>
            <person name="Teeling H."/>
            <person name="Lombardot T."/>
            <person name="Ludwig W."/>
            <person name="Gade D."/>
            <person name="Beck A."/>
            <person name="Borzym K."/>
            <person name="Heitmann K."/>
            <person name="Rabus R."/>
            <person name="Schlesner H."/>
            <person name="Amann R."/>
            <person name="Reinhardt R."/>
        </authorList>
    </citation>
    <scope>NUCLEOTIDE SEQUENCE [LARGE SCALE GENOMIC DNA]</scope>
    <source>
        <strain>DSM 10527 / NCIMB 13988 / SH1</strain>
    </source>
</reference>
<proteinExistence type="inferred from homology"/>
<name>LGT_RHOBA</name>
<sequence length="492" mass="52527">MEVARTVRIPHAFDGLTLSRQATMRRTLFLIPHEFAGWPIFGIGWALLFLLIAVLAYVGWESRRGGLGASTAIRQIAGFAVMAAVILVVVVPRTELVNTLGDPVGVAVRGYGMFLMLAAIASVGLAAWRAERAGLGADSILQLAPWTFIGGLLGARVFYVTQYYEDFLRPTWGETLMAMAALNQGGLVVYGGFIGGFIASLIALKRHQTPIWRIGDVIIPCVFVGLLFGRLGCLMNGCCYGGACEAGPLAVQFPAGSQVHAEQLLSGELLGIEGHPVVSDEEPPAGQSQMVVDSVRPDSLANQAGVKKGETLTIALDPSYRDQVPLDRPAEEALPGVVVLRDDEVVARFSPRDLPSIADPVWGTQIISSVFAAIMFVVLLIVERILHRPSKQTDDAVTERAITGGRRPGVLMLVGFIAYGVLRIVLEWIRVDEKGQFGTSLSISQWVSLVVIAASLVTLFIRWRGVDSTSEQTPGGGNTNVVGGSDAAAAGL</sequence>
<comment type="function">
    <text evidence="1">Catalyzes the transfer of the diacylglyceryl group from phosphatidylglycerol to the sulfhydryl group of the N-terminal cysteine of a prolipoprotein, the first step in the formation of mature lipoproteins.</text>
</comment>
<comment type="catalytic activity">
    <reaction evidence="1">
        <text>L-cysteinyl-[prolipoprotein] + a 1,2-diacyl-sn-glycero-3-phospho-(1'-sn-glycerol) = an S-1,2-diacyl-sn-glyceryl-L-cysteinyl-[prolipoprotein] + sn-glycerol 1-phosphate + H(+)</text>
        <dbReference type="Rhea" id="RHEA:56712"/>
        <dbReference type="Rhea" id="RHEA-COMP:14679"/>
        <dbReference type="Rhea" id="RHEA-COMP:14680"/>
        <dbReference type="ChEBI" id="CHEBI:15378"/>
        <dbReference type="ChEBI" id="CHEBI:29950"/>
        <dbReference type="ChEBI" id="CHEBI:57685"/>
        <dbReference type="ChEBI" id="CHEBI:64716"/>
        <dbReference type="ChEBI" id="CHEBI:140658"/>
        <dbReference type="EC" id="2.5.1.145"/>
    </reaction>
</comment>
<comment type="pathway">
    <text evidence="1">Protein modification; lipoprotein biosynthesis (diacylglyceryl transfer).</text>
</comment>
<comment type="subcellular location">
    <subcellularLocation>
        <location evidence="1">Cell inner membrane</location>
        <topology evidence="1">Multi-pass membrane protein</topology>
    </subcellularLocation>
</comment>
<comment type="similarity">
    <text evidence="1 2">Belongs to the Lgt family.</text>
</comment>
<keyword id="KW-0997">Cell inner membrane</keyword>
<keyword id="KW-1003">Cell membrane</keyword>
<keyword id="KW-0472">Membrane</keyword>
<keyword id="KW-1185">Reference proteome</keyword>
<keyword id="KW-0808">Transferase</keyword>
<keyword id="KW-0812">Transmembrane</keyword>
<keyword id="KW-1133">Transmembrane helix</keyword>
<organism>
    <name type="scientific">Rhodopirellula baltica (strain DSM 10527 / NCIMB 13988 / SH1)</name>
    <dbReference type="NCBI Taxonomy" id="243090"/>
    <lineage>
        <taxon>Bacteria</taxon>
        <taxon>Pseudomonadati</taxon>
        <taxon>Planctomycetota</taxon>
        <taxon>Planctomycetia</taxon>
        <taxon>Pirellulales</taxon>
        <taxon>Pirellulaceae</taxon>
        <taxon>Rhodopirellula</taxon>
    </lineage>
</organism>